<proteinExistence type="evidence at transcript level"/>
<protein>
    <recommendedName>
        <fullName>Outer envelope pore protein 21A, chloroplastic</fullName>
    </recommendedName>
    <alternativeName>
        <fullName>Chloroplastic outer envelope pore protein of 21 kDa A</fullName>
    </alternativeName>
</protein>
<dbReference type="EMBL" id="AC069251">
    <property type="protein sequence ID" value="AAF80623.1"/>
    <property type="status" value="ALT_SEQ"/>
    <property type="molecule type" value="Genomic_DNA"/>
</dbReference>
<dbReference type="EMBL" id="CP002684">
    <property type="protein sequence ID" value="AEE30027.1"/>
    <property type="molecule type" value="Genomic_DNA"/>
</dbReference>
<dbReference type="EMBL" id="BT014774">
    <property type="protein sequence ID" value="AAT41757.1"/>
    <property type="molecule type" value="mRNA"/>
</dbReference>
<dbReference type="EMBL" id="BT015010">
    <property type="protein sequence ID" value="AAT70461.1"/>
    <property type="molecule type" value="mRNA"/>
</dbReference>
<dbReference type="EMBL" id="AK220825">
    <property type="protein sequence ID" value="BAD94125.1"/>
    <property type="status" value="ALT_INIT"/>
    <property type="molecule type" value="mRNA"/>
</dbReference>
<dbReference type="RefSeq" id="NP_173505.2">
    <property type="nucleotide sequence ID" value="NM_101934.3"/>
</dbReference>
<dbReference type="SMR" id="Q6ID99"/>
<dbReference type="FunCoup" id="Q6ID99">
    <property type="interactions" value="958"/>
</dbReference>
<dbReference type="STRING" id="3702.Q6ID99"/>
<dbReference type="TCDB" id="1.B.29.1.4">
    <property type="family name" value="the plastid outer envelope porin of 21 kda (oep21) family"/>
</dbReference>
<dbReference type="PaxDb" id="3702-AT1G20816.1"/>
<dbReference type="ProteomicsDB" id="248898"/>
<dbReference type="EnsemblPlants" id="AT1G20816.1">
    <property type="protein sequence ID" value="AT1G20816.1"/>
    <property type="gene ID" value="AT1G20816"/>
</dbReference>
<dbReference type="GeneID" id="838673"/>
<dbReference type="Gramene" id="AT1G20816.1">
    <property type="protein sequence ID" value="AT1G20816.1"/>
    <property type="gene ID" value="AT1G20816"/>
</dbReference>
<dbReference type="KEGG" id="ath:AT1G20816"/>
<dbReference type="Araport" id="AT1G20816"/>
<dbReference type="TAIR" id="AT1G20816"/>
<dbReference type="eggNOG" id="ENOG502RX9S">
    <property type="taxonomic scope" value="Eukaryota"/>
</dbReference>
<dbReference type="HOGENOM" id="CLU_104399_0_0_1"/>
<dbReference type="InParanoid" id="Q6ID99"/>
<dbReference type="OMA" id="DWNIWKF"/>
<dbReference type="OrthoDB" id="503907at2759"/>
<dbReference type="PhylomeDB" id="Q6ID99"/>
<dbReference type="PRO" id="PR:Q6ID99"/>
<dbReference type="Proteomes" id="UP000006548">
    <property type="component" value="Chromosome 1"/>
</dbReference>
<dbReference type="ExpressionAtlas" id="Q6ID99">
    <property type="expression patterns" value="baseline and differential"/>
</dbReference>
<dbReference type="GO" id="GO:0009707">
    <property type="term" value="C:chloroplast outer membrane"/>
    <property type="evidence" value="ECO:0000250"/>
    <property type="project" value="UniProtKB"/>
</dbReference>
<dbReference type="GO" id="GO:0034426">
    <property type="term" value="C:etioplast membrane"/>
    <property type="evidence" value="ECO:0000250"/>
    <property type="project" value="UniProtKB"/>
</dbReference>
<dbReference type="GO" id="GO:0005634">
    <property type="term" value="C:nucleus"/>
    <property type="evidence" value="ECO:0007005"/>
    <property type="project" value="TAIR"/>
</dbReference>
<dbReference type="GO" id="GO:0046930">
    <property type="term" value="C:pore complex"/>
    <property type="evidence" value="ECO:0007669"/>
    <property type="project" value="UniProtKB-KW"/>
</dbReference>
<dbReference type="GO" id="GO:0015288">
    <property type="term" value="F:porin activity"/>
    <property type="evidence" value="ECO:0000250"/>
    <property type="project" value="UniProtKB"/>
</dbReference>
<dbReference type="GO" id="GO:0008308">
    <property type="term" value="F:voltage-gated monoatomic anion channel activity"/>
    <property type="evidence" value="ECO:0000250"/>
    <property type="project" value="UniProtKB"/>
</dbReference>
<dbReference type="GO" id="GO:0044070">
    <property type="term" value="P:regulation of monoatomic anion transport"/>
    <property type="evidence" value="ECO:0000250"/>
    <property type="project" value="UniProtKB"/>
</dbReference>
<dbReference type="InterPro" id="IPR034575">
    <property type="entry name" value="OEP21"/>
</dbReference>
<dbReference type="PANTHER" id="PTHR35993:SF2">
    <property type="entry name" value="OUTER ENVELOPE PORE PROTEIN 21A, CHLOROPLASTIC"/>
    <property type="match status" value="1"/>
</dbReference>
<dbReference type="PANTHER" id="PTHR35993">
    <property type="entry name" value="OUTER ENVELOPE PORE PROTEIN 21B, CHLOROPLASTIC"/>
    <property type="match status" value="1"/>
</dbReference>
<name>OP21A_ARATH</name>
<evidence type="ECO:0000250" key="1"/>
<evidence type="ECO:0000255" key="2"/>
<evidence type="ECO:0000305" key="3"/>
<organism>
    <name type="scientific">Arabidopsis thaliana</name>
    <name type="common">Mouse-ear cress</name>
    <dbReference type="NCBI Taxonomy" id="3702"/>
    <lineage>
        <taxon>Eukaryota</taxon>
        <taxon>Viridiplantae</taxon>
        <taxon>Streptophyta</taxon>
        <taxon>Embryophyta</taxon>
        <taxon>Tracheophyta</taxon>
        <taxon>Spermatophyta</taxon>
        <taxon>Magnoliopsida</taxon>
        <taxon>eudicotyledons</taxon>
        <taxon>Gunneridae</taxon>
        <taxon>Pentapetalae</taxon>
        <taxon>rosids</taxon>
        <taxon>malvids</taxon>
        <taxon>Brassicales</taxon>
        <taxon>Brassicaceae</taxon>
        <taxon>Camelineae</taxon>
        <taxon>Arabidopsis</taxon>
    </lineage>
</organism>
<reference key="1">
    <citation type="journal article" date="2000" name="Nature">
        <title>Sequence and analysis of chromosome 1 of the plant Arabidopsis thaliana.</title>
        <authorList>
            <person name="Theologis A."/>
            <person name="Ecker J.R."/>
            <person name="Palm C.J."/>
            <person name="Federspiel N.A."/>
            <person name="Kaul S."/>
            <person name="White O."/>
            <person name="Alonso J."/>
            <person name="Altafi H."/>
            <person name="Araujo R."/>
            <person name="Bowman C.L."/>
            <person name="Brooks S.Y."/>
            <person name="Buehler E."/>
            <person name="Chan A."/>
            <person name="Chao Q."/>
            <person name="Chen H."/>
            <person name="Cheuk R.F."/>
            <person name="Chin C.W."/>
            <person name="Chung M.K."/>
            <person name="Conn L."/>
            <person name="Conway A.B."/>
            <person name="Conway A.R."/>
            <person name="Creasy T.H."/>
            <person name="Dewar K."/>
            <person name="Dunn P."/>
            <person name="Etgu P."/>
            <person name="Feldblyum T.V."/>
            <person name="Feng J.-D."/>
            <person name="Fong B."/>
            <person name="Fujii C.Y."/>
            <person name="Gill J.E."/>
            <person name="Goldsmith A.D."/>
            <person name="Haas B."/>
            <person name="Hansen N.F."/>
            <person name="Hughes B."/>
            <person name="Huizar L."/>
            <person name="Hunter J.L."/>
            <person name="Jenkins J."/>
            <person name="Johnson-Hopson C."/>
            <person name="Khan S."/>
            <person name="Khaykin E."/>
            <person name="Kim C.J."/>
            <person name="Koo H.L."/>
            <person name="Kremenetskaia I."/>
            <person name="Kurtz D.B."/>
            <person name="Kwan A."/>
            <person name="Lam B."/>
            <person name="Langin-Hooper S."/>
            <person name="Lee A."/>
            <person name="Lee J.M."/>
            <person name="Lenz C.A."/>
            <person name="Li J.H."/>
            <person name="Li Y.-P."/>
            <person name="Lin X."/>
            <person name="Liu S.X."/>
            <person name="Liu Z.A."/>
            <person name="Luros J.S."/>
            <person name="Maiti R."/>
            <person name="Marziali A."/>
            <person name="Militscher J."/>
            <person name="Miranda M."/>
            <person name="Nguyen M."/>
            <person name="Nierman W.C."/>
            <person name="Osborne B.I."/>
            <person name="Pai G."/>
            <person name="Peterson J."/>
            <person name="Pham P.K."/>
            <person name="Rizzo M."/>
            <person name="Rooney T."/>
            <person name="Rowley D."/>
            <person name="Sakano H."/>
            <person name="Salzberg S.L."/>
            <person name="Schwartz J.R."/>
            <person name="Shinn P."/>
            <person name="Southwick A.M."/>
            <person name="Sun H."/>
            <person name="Tallon L.J."/>
            <person name="Tambunga G."/>
            <person name="Toriumi M.J."/>
            <person name="Town C.D."/>
            <person name="Utterback T."/>
            <person name="Van Aken S."/>
            <person name="Vaysberg M."/>
            <person name="Vysotskaia V.S."/>
            <person name="Walker M."/>
            <person name="Wu D."/>
            <person name="Yu G."/>
            <person name="Fraser C.M."/>
            <person name="Venter J.C."/>
            <person name="Davis R.W."/>
        </authorList>
    </citation>
    <scope>NUCLEOTIDE SEQUENCE [LARGE SCALE GENOMIC DNA]</scope>
    <source>
        <strain>cv. Columbia</strain>
    </source>
</reference>
<reference key="2">
    <citation type="journal article" date="2017" name="Plant J.">
        <title>Araport11: a complete reannotation of the Arabidopsis thaliana reference genome.</title>
        <authorList>
            <person name="Cheng C.Y."/>
            <person name="Krishnakumar V."/>
            <person name="Chan A.P."/>
            <person name="Thibaud-Nissen F."/>
            <person name="Schobel S."/>
            <person name="Town C.D."/>
        </authorList>
    </citation>
    <scope>GENOME REANNOTATION</scope>
    <source>
        <strain>cv. Columbia</strain>
    </source>
</reference>
<reference key="3">
    <citation type="submission" date="2004-06" db="EMBL/GenBank/DDBJ databases">
        <title>Arabidopsis ORF clones.</title>
        <authorList>
            <person name="Cheuk R.F."/>
            <person name="Chen H."/>
            <person name="Kim C.J."/>
            <person name="Shinn P."/>
            <person name="Ecker J.R."/>
        </authorList>
    </citation>
    <scope>NUCLEOTIDE SEQUENCE [LARGE SCALE MRNA]</scope>
    <source>
        <strain>cv. Columbia</strain>
    </source>
</reference>
<reference key="4">
    <citation type="submission" date="2005-03" db="EMBL/GenBank/DDBJ databases">
        <title>Large-scale analysis of RIKEN Arabidopsis full-length (RAFL) cDNAs.</title>
        <authorList>
            <person name="Totoki Y."/>
            <person name="Seki M."/>
            <person name="Ishida J."/>
            <person name="Nakajima M."/>
            <person name="Enju A."/>
            <person name="Kamiya A."/>
            <person name="Narusaka M."/>
            <person name="Shin-i T."/>
            <person name="Nakagawa M."/>
            <person name="Sakamoto N."/>
            <person name="Oishi K."/>
            <person name="Kohara Y."/>
            <person name="Kobayashi M."/>
            <person name="Toyoda A."/>
            <person name="Sakaki Y."/>
            <person name="Sakurai T."/>
            <person name="Iida K."/>
            <person name="Akiyama K."/>
            <person name="Satou M."/>
            <person name="Toyoda T."/>
            <person name="Konagaya A."/>
            <person name="Carninci P."/>
            <person name="Kawai J."/>
            <person name="Hayashizaki Y."/>
            <person name="Shinozaki K."/>
        </authorList>
    </citation>
    <scope>NUCLEOTIDE SEQUENCE [LARGE SCALE MRNA] OF 37-167</scope>
    <source>
        <strain>cv. Columbia</strain>
    </source>
</reference>
<reference key="5">
    <citation type="journal article" date="2003" name="Protein Sci.">
        <title>Prediction of the plant beta-barrel proteome: a case study of the chloroplast outer envelope.</title>
        <authorList>
            <person name="Schleiff E."/>
            <person name="Eichacker L.A."/>
            <person name="Eckart K."/>
            <person name="Becker T."/>
            <person name="Mirus O."/>
            <person name="Stahl T."/>
            <person name="Soll J."/>
        </authorList>
    </citation>
    <scope>GENE FAMILY</scope>
</reference>
<gene>
    <name type="primary">OEP21A</name>
    <name type="ordered locus">At1g20816</name>
    <name type="ORF">F2D10.33</name>
</gene>
<comment type="function">
    <text evidence="1">Voltage-dependent rectifying anion channel that facilitates the translocation between chloroplast and cytoplasm of phosphorylated carbohydrates such as triosephosphate, 3-phosphoglycerate and inorganic phosphate (Pi) depending of ATP to triosephosphate ratio in the plastidial intermembrane space; in high triosephosphate/ATP conditions (e.g. photosynthesis), export of triosphosphate from chloroplast (outward rectifying channels), but in high ATP/triosephosphate conditions (e.g. dark phase), import of phosphosolutes (inward rectifying channels) (By similarity).</text>
</comment>
<comment type="subcellular location">
    <subcellularLocation>
        <location evidence="1">Plastid</location>
        <location evidence="1">Etioplast membrane</location>
        <topology evidence="1">Multi-pass membrane protein</topology>
    </subcellularLocation>
    <subcellularLocation>
        <location evidence="1">Plastid</location>
        <location evidence="1">Chloroplast outer membrane</location>
        <topology evidence="1">Multi-pass membrane protein</topology>
    </subcellularLocation>
    <text evidence="1">Present in non-green root plastids.</text>
</comment>
<comment type="similarity">
    <text evidence="3">Belongs to the plastid outer envelope porin OEP21 (TC 1.B.29) family.</text>
</comment>
<comment type="sequence caution" evidence="3">
    <conflict type="erroneous gene model prediction">
        <sequence resource="EMBL-CDS" id="AAF80623"/>
    </conflict>
</comment>
<comment type="sequence caution" evidence="3">
    <conflict type="erroneous initiation">
        <sequence resource="EMBL-CDS" id="BAD94125"/>
    </conflict>
    <text>Truncated N-terminus.</text>
</comment>
<keyword id="KW-0150">Chloroplast</keyword>
<keyword id="KW-0406">Ion transport</keyword>
<keyword id="KW-0472">Membrane</keyword>
<keyword id="KW-0934">Plastid</keyword>
<keyword id="KW-1002">Plastid outer membrane</keyword>
<keyword id="KW-0626">Porin</keyword>
<keyword id="KW-1185">Reference proteome</keyword>
<keyword id="KW-0812">Transmembrane</keyword>
<keyword id="KW-1134">Transmembrane beta strand</keyword>
<keyword id="KW-0813">Transport</keyword>
<feature type="chain" id="PRO_0000415547" description="Outer envelope pore protein 21A, chloroplastic">
    <location>
        <begin position="1"/>
        <end position="167"/>
    </location>
</feature>
<feature type="topological domain" description="Cytoplasmic" evidence="2">
    <location>
        <begin position="1"/>
        <end position="21"/>
    </location>
</feature>
<feature type="transmembrane region" description="Beta stranded; Name=1" evidence="1">
    <location>
        <begin position="22"/>
        <end position="31"/>
    </location>
</feature>
<feature type="topological domain" description="Chloroplast intermembrane" evidence="2">
    <location>
        <begin position="32"/>
        <end position="55"/>
    </location>
</feature>
<feature type="transmembrane region" description="Beta stranded; Name=2" evidence="1">
    <location>
        <begin position="56"/>
        <end position="65"/>
    </location>
</feature>
<feature type="topological domain" description="Cytoplasmic" evidence="2">
    <location>
        <begin position="66"/>
        <end position="71"/>
    </location>
</feature>
<feature type="transmembrane region" description="Beta stranded; Name=3" evidence="1">
    <location>
        <begin position="72"/>
        <end position="81"/>
    </location>
</feature>
<feature type="topological domain" description="Chloroplast intermembrane" evidence="2">
    <location>
        <begin position="82"/>
        <end position="87"/>
    </location>
</feature>
<feature type="transmembrane region" description="Beta stranded; Name=4" evidence="1">
    <location>
        <begin position="88"/>
        <end position="97"/>
    </location>
</feature>
<feature type="topological domain" description="Cytoplasmic" evidence="2">
    <location>
        <begin position="98"/>
        <end position="110"/>
    </location>
</feature>
<feature type="transmembrane region" description="Beta stranded; Name=5" evidence="1">
    <location>
        <begin position="111"/>
        <end position="120"/>
    </location>
</feature>
<feature type="topological domain" description="Chloroplast intermembrane" evidence="2">
    <location>
        <begin position="121"/>
        <end position="127"/>
    </location>
</feature>
<feature type="transmembrane region" description="Beta stranded; Name=6" evidence="1">
    <location>
        <begin position="128"/>
        <end position="137"/>
    </location>
</feature>
<feature type="topological domain" description="Cytoplasmic" evidence="2">
    <location>
        <begin position="138"/>
        <end position="142"/>
    </location>
</feature>
<feature type="transmembrane region" description="Beta stranded; Name=7" evidence="1">
    <location>
        <begin position="143"/>
        <end position="152"/>
    </location>
</feature>
<feature type="topological domain" description="Chloroplast intermembrane" evidence="2">
    <location>
        <begin position="153"/>
        <end position="158"/>
    </location>
</feature>
<feature type="transmembrane region" description="Beta stranded; Name=8" evidence="1">
    <location>
        <begin position="159"/>
        <end position="167"/>
    </location>
</feature>
<feature type="sequence conflict" description="In Ref. 4; BAD94125." evidence="3" ref="4">
    <original>Y</original>
    <variation>N</variation>
    <location>
        <position position="135"/>
    </location>
</feature>
<sequence length="167" mass="19782">METSLRYATNSRSLKIHAKEKFPVNSKTRLQLHGELDTGAGVPSYFCAMIRYFFHEASTNLGVGLHYDKREKLRCLVRGKKKFPVITDEVVTFNIKGRCDFDQDLVQRNAKGAAEFDWNIWKFQKDQDLRLRIGYEMFEKVPYMQIRENNWTFNTNLKGKWNVRYDL</sequence>
<accession>Q6ID99</accession>
<accession>Q56ZY5</accession>
<accession>Q9LM70</accession>